<reference key="1">
    <citation type="journal article" date="2005" name="Proc. Natl. Acad. Sci. U.S.A.">
        <title>The complete genome sequence of Mycobacterium avium subspecies paratuberculosis.</title>
        <authorList>
            <person name="Li L."/>
            <person name="Bannantine J.P."/>
            <person name="Zhang Q."/>
            <person name="Amonsin A."/>
            <person name="May B.J."/>
            <person name="Alt D."/>
            <person name="Banerji N."/>
            <person name="Kanjilal S."/>
            <person name="Kapur V."/>
        </authorList>
    </citation>
    <scope>NUCLEOTIDE SEQUENCE [LARGE SCALE GENOMIC DNA]</scope>
    <source>
        <strain>ATCC BAA-968 / K-10</strain>
    </source>
</reference>
<name>EFTS_MYCPA</name>
<accession>P61336</accession>
<proteinExistence type="inferred from homology"/>
<protein>
    <recommendedName>
        <fullName evidence="1">Elongation factor Ts</fullName>
        <shortName evidence="1">EF-Ts</shortName>
    </recommendedName>
</protein>
<gene>
    <name evidence="1" type="primary">tsf</name>
    <name type="ordered locus">MAP_2955c</name>
</gene>
<keyword id="KW-0963">Cytoplasm</keyword>
<keyword id="KW-0251">Elongation factor</keyword>
<keyword id="KW-0648">Protein biosynthesis</keyword>
<keyword id="KW-1185">Reference proteome</keyword>
<sequence>MANFTAADVKRLRELTGAGMLDCKNALAESDGDFDKAVEALRIKGAKDVGKRAERATAEGLVAAQGGALIELNSETDFVAKNAEFQALADQIVAAAASSKAADVDALKAAKIGDTTVEQAIAELSAKIGEKLELRRVAHFDGTVEAYLHRRAADLPPAVGVLVEYQGSGKDSDKEAAHAVALQIAALKARYLSRGDVPEDVVASERRIAEETAKAEGKPEQALPKIVEGRLNGFFKDAVLLEQPSVSDSKKTVKALLDEAGVTVTRFVRFEVGQA</sequence>
<feature type="chain" id="PRO_0000161156" description="Elongation factor Ts">
    <location>
        <begin position="1"/>
        <end position="275"/>
    </location>
</feature>
<feature type="region of interest" description="Involved in Mg(2+) ion dislocation from EF-Tu" evidence="1">
    <location>
        <begin position="76"/>
        <end position="79"/>
    </location>
</feature>
<dbReference type="EMBL" id="AE016958">
    <property type="protein sequence ID" value="AAS05272.1"/>
    <property type="molecule type" value="Genomic_DNA"/>
</dbReference>
<dbReference type="RefSeq" id="WP_003875094.1">
    <property type="nucleotide sequence ID" value="NZ_CP106873.1"/>
</dbReference>
<dbReference type="SMR" id="P61336"/>
<dbReference type="STRING" id="262316.MAP_2955c"/>
<dbReference type="KEGG" id="mpa:MAP_2955c"/>
<dbReference type="eggNOG" id="COG0264">
    <property type="taxonomic scope" value="Bacteria"/>
</dbReference>
<dbReference type="HOGENOM" id="CLU_047155_0_0_11"/>
<dbReference type="Proteomes" id="UP000000580">
    <property type="component" value="Chromosome"/>
</dbReference>
<dbReference type="GO" id="GO:0005737">
    <property type="term" value="C:cytoplasm"/>
    <property type="evidence" value="ECO:0007669"/>
    <property type="project" value="UniProtKB-SubCell"/>
</dbReference>
<dbReference type="GO" id="GO:0003746">
    <property type="term" value="F:translation elongation factor activity"/>
    <property type="evidence" value="ECO:0007669"/>
    <property type="project" value="UniProtKB-UniRule"/>
</dbReference>
<dbReference type="CDD" id="cd14275">
    <property type="entry name" value="UBA_EF-Ts"/>
    <property type="match status" value="1"/>
</dbReference>
<dbReference type="FunFam" id="1.10.286.20:FF:000001">
    <property type="entry name" value="Elongation factor Ts"/>
    <property type="match status" value="1"/>
</dbReference>
<dbReference type="FunFam" id="1.10.8.10:FF:000001">
    <property type="entry name" value="Elongation factor Ts"/>
    <property type="match status" value="1"/>
</dbReference>
<dbReference type="Gene3D" id="1.10.286.20">
    <property type="match status" value="1"/>
</dbReference>
<dbReference type="Gene3D" id="1.10.8.10">
    <property type="entry name" value="DNA helicase RuvA subunit, C-terminal domain"/>
    <property type="match status" value="1"/>
</dbReference>
<dbReference type="Gene3D" id="3.30.479.20">
    <property type="entry name" value="Elongation factor Ts, dimerisation domain"/>
    <property type="match status" value="2"/>
</dbReference>
<dbReference type="HAMAP" id="MF_00050">
    <property type="entry name" value="EF_Ts"/>
    <property type="match status" value="1"/>
</dbReference>
<dbReference type="InterPro" id="IPR036402">
    <property type="entry name" value="EF-Ts_dimer_sf"/>
</dbReference>
<dbReference type="InterPro" id="IPR001816">
    <property type="entry name" value="Transl_elong_EFTs/EF1B"/>
</dbReference>
<dbReference type="InterPro" id="IPR014039">
    <property type="entry name" value="Transl_elong_EFTs/EF1B_dimer"/>
</dbReference>
<dbReference type="InterPro" id="IPR018101">
    <property type="entry name" value="Transl_elong_Ts_CS"/>
</dbReference>
<dbReference type="InterPro" id="IPR009060">
    <property type="entry name" value="UBA-like_sf"/>
</dbReference>
<dbReference type="NCBIfam" id="TIGR00116">
    <property type="entry name" value="tsf"/>
    <property type="match status" value="1"/>
</dbReference>
<dbReference type="PANTHER" id="PTHR11741">
    <property type="entry name" value="ELONGATION FACTOR TS"/>
    <property type="match status" value="1"/>
</dbReference>
<dbReference type="PANTHER" id="PTHR11741:SF0">
    <property type="entry name" value="ELONGATION FACTOR TS, MITOCHONDRIAL"/>
    <property type="match status" value="1"/>
</dbReference>
<dbReference type="Pfam" id="PF00889">
    <property type="entry name" value="EF_TS"/>
    <property type="match status" value="1"/>
</dbReference>
<dbReference type="SUPFAM" id="SSF54713">
    <property type="entry name" value="Elongation factor Ts (EF-Ts), dimerisation domain"/>
    <property type="match status" value="1"/>
</dbReference>
<dbReference type="SUPFAM" id="SSF46934">
    <property type="entry name" value="UBA-like"/>
    <property type="match status" value="1"/>
</dbReference>
<dbReference type="PROSITE" id="PS01126">
    <property type="entry name" value="EF_TS_1"/>
    <property type="match status" value="1"/>
</dbReference>
<dbReference type="PROSITE" id="PS01127">
    <property type="entry name" value="EF_TS_2"/>
    <property type="match status" value="1"/>
</dbReference>
<evidence type="ECO:0000255" key="1">
    <source>
        <dbReference type="HAMAP-Rule" id="MF_00050"/>
    </source>
</evidence>
<organism>
    <name type="scientific">Mycolicibacterium paratuberculosis (strain ATCC BAA-968 / K-10)</name>
    <name type="common">Mycobacterium paratuberculosis</name>
    <dbReference type="NCBI Taxonomy" id="262316"/>
    <lineage>
        <taxon>Bacteria</taxon>
        <taxon>Bacillati</taxon>
        <taxon>Actinomycetota</taxon>
        <taxon>Actinomycetes</taxon>
        <taxon>Mycobacteriales</taxon>
        <taxon>Mycobacteriaceae</taxon>
        <taxon>Mycobacterium</taxon>
        <taxon>Mycobacterium avium complex (MAC)</taxon>
    </lineage>
</organism>
<comment type="function">
    <text evidence="1">Associates with the EF-Tu.GDP complex and induces the exchange of GDP to GTP. It remains bound to the aminoacyl-tRNA.EF-Tu.GTP complex up to the GTP hydrolysis stage on the ribosome.</text>
</comment>
<comment type="subcellular location">
    <subcellularLocation>
        <location evidence="1">Cytoplasm</location>
    </subcellularLocation>
</comment>
<comment type="similarity">
    <text evidence="1">Belongs to the EF-Ts family.</text>
</comment>